<sequence length="245" mass="28283">MDDARTLLDIKEYPDTEVQKNRVLTLEEWQDKWVSHKIGFHQEQGHKLLKKHLDAFLKGESGLRVFFPLCGKAVEMKWFADRGHSVVGVEISELGIREFFSEQNLSYSEEPITEVPGAKVFKSSAGNISLYCCSIFDLPRVNIGKFDRIWDRGALVAVNPSDRKRYAAVMLSLLRKGFQYLLAVLSYDPTKHAGPPFYVPDAEIKMLFDTKCKIHCLEKVDAFEERHKSWGIDYIFEKLYLLTEK</sequence>
<keyword id="KW-0007">Acetylation</keyword>
<keyword id="KW-0963">Cytoplasm</keyword>
<keyword id="KW-0489">Methyltransferase</keyword>
<keyword id="KW-1185">Reference proteome</keyword>
<keyword id="KW-0949">S-adenosyl-L-methionine</keyword>
<keyword id="KW-0808">Transferase</keyword>
<gene>
    <name type="primary">TPMT</name>
</gene>
<evidence type="ECO:0000250" key="1"/>
<evidence type="ECO:0000250" key="2">
    <source>
        <dbReference type="UniProtKB" id="P51580"/>
    </source>
</evidence>
<evidence type="ECO:0000305" key="3"/>
<proteinExistence type="evidence at transcript level"/>
<reference key="1">
    <citation type="journal article" date="2005" name="Pharmacogenet. Genomics">
        <title>Thiopurine S-methyltransferase pharmacogenetics: variant allele functional and comparative genomics.</title>
        <authorList>
            <person name="Salavaggione O.E."/>
            <person name="Wang L."/>
            <person name="Wiepert M."/>
            <person name="Yee V.C."/>
            <person name="Weinshilboum R.M."/>
        </authorList>
    </citation>
    <scope>NUCLEOTIDE SEQUENCE [MRNA]</scope>
</reference>
<name>TPMT_RABIT</name>
<feature type="chain" id="PRO_0000220112" description="Thiopurine S-methyltransferase">
    <location>
        <begin position="1"/>
        <end position="245"/>
    </location>
</feature>
<feature type="binding site" evidence="1">
    <location>
        <begin position="29"/>
        <end position="40"/>
    </location>
    <ligand>
        <name>S-adenosyl-L-methionine</name>
        <dbReference type="ChEBI" id="CHEBI:59789"/>
    </ligand>
</feature>
<feature type="binding site" evidence="1">
    <location>
        <position position="40"/>
    </location>
    <ligand>
        <name>substrate</name>
    </ligand>
</feature>
<feature type="binding site" evidence="1">
    <location>
        <position position="69"/>
    </location>
    <ligand>
        <name>S-adenosyl-L-methionine</name>
        <dbReference type="ChEBI" id="CHEBI:59789"/>
    </ligand>
</feature>
<feature type="binding site" evidence="1">
    <location>
        <position position="90"/>
    </location>
    <ligand>
        <name>S-adenosyl-L-methionine</name>
        <dbReference type="ChEBI" id="CHEBI:59789"/>
    </ligand>
</feature>
<feature type="binding site" evidence="1">
    <location>
        <begin position="134"/>
        <end position="135"/>
    </location>
    <ligand>
        <name>S-adenosyl-L-methionine</name>
        <dbReference type="ChEBI" id="CHEBI:59789"/>
    </ligand>
</feature>
<feature type="binding site" evidence="1">
    <location>
        <position position="152"/>
    </location>
    <ligand>
        <name>S-adenosyl-L-methionine</name>
        <dbReference type="ChEBI" id="CHEBI:59789"/>
    </ligand>
</feature>
<feature type="modified residue" description="N6-acetyllysine" evidence="2">
    <location>
        <position position="58"/>
    </location>
</feature>
<comment type="catalytic activity">
    <reaction evidence="2">
        <text>S-adenosyl-L-methionine + a thiopurine = S-adenosyl-L-homocysteine + a thiopurine S-methylether.</text>
        <dbReference type="EC" id="2.1.1.67"/>
    </reaction>
</comment>
<comment type="subunit">
    <text evidence="2">Monomer.</text>
</comment>
<comment type="subcellular location">
    <subcellularLocation>
        <location>Cytoplasm</location>
    </subcellularLocation>
</comment>
<comment type="similarity">
    <text evidence="3">Belongs to the class I-like SAM-binding methyltransferase superfamily. TPMT family.</text>
</comment>
<organism>
    <name type="scientific">Oryctolagus cuniculus</name>
    <name type="common">Rabbit</name>
    <dbReference type="NCBI Taxonomy" id="9986"/>
    <lineage>
        <taxon>Eukaryota</taxon>
        <taxon>Metazoa</taxon>
        <taxon>Chordata</taxon>
        <taxon>Craniata</taxon>
        <taxon>Vertebrata</taxon>
        <taxon>Euteleostomi</taxon>
        <taxon>Mammalia</taxon>
        <taxon>Eutheria</taxon>
        <taxon>Euarchontoglires</taxon>
        <taxon>Glires</taxon>
        <taxon>Lagomorpha</taxon>
        <taxon>Leporidae</taxon>
        <taxon>Oryctolagus</taxon>
    </lineage>
</organism>
<dbReference type="EC" id="2.1.1.67"/>
<dbReference type="EMBL" id="AY827084">
    <property type="protein sequence ID" value="AAX37648.1"/>
    <property type="molecule type" value="mRNA"/>
</dbReference>
<dbReference type="RefSeq" id="NP_001076153.1">
    <property type="nucleotide sequence ID" value="NM_001082684.1"/>
</dbReference>
<dbReference type="SMR" id="Q3BCQ8"/>
<dbReference type="FunCoup" id="Q3BCQ8">
    <property type="interactions" value="7"/>
</dbReference>
<dbReference type="STRING" id="9986.ENSOCUP00000003340"/>
<dbReference type="PaxDb" id="9986-ENSOCUP00000003340"/>
<dbReference type="GeneID" id="100009411"/>
<dbReference type="KEGG" id="ocu:100009411"/>
<dbReference type="CTD" id="7172"/>
<dbReference type="eggNOG" id="ENOG502QSF5">
    <property type="taxonomic scope" value="Eukaryota"/>
</dbReference>
<dbReference type="InParanoid" id="Q3BCQ8"/>
<dbReference type="OrthoDB" id="276151at2759"/>
<dbReference type="Proteomes" id="UP000001811">
    <property type="component" value="Unplaced"/>
</dbReference>
<dbReference type="GO" id="GO:0005737">
    <property type="term" value="C:cytoplasm"/>
    <property type="evidence" value="ECO:0007669"/>
    <property type="project" value="UniProtKB-SubCell"/>
</dbReference>
<dbReference type="GO" id="GO:0008119">
    <property type="term" value="F:thiopurine S-methyltransferase activity"/>
    <property type="evidence" value="ECO:0007669"/>
    <property type="project" value="UniProtKB-EC"/>
</dbReference>
<dbReference type="GO" id="GO:0032259">
    <property type="term" value="P:methylation"/>
    <property type="evidence" value="ECO:0007669"/>
    <property type="project" value="UniProtKB-KW"/>
</dbReference>
<dbReference type="FunFam" id="3.40.50.150:FF:000101">
    <property type="entry name" value="Thiopurine S-methyltransferase"/>
    <property type="match status" value="1"/>
</dbReference>
<dbReference type="Gene3D" id="3.40.50.150">
    <property type="entry name" value="Vaccinia Virus protein VP39"/>
    <property type="match status" value="1"/>
</dbReference>
<dbReference type="HAMAP" id="MF_00812">
    <property type="entry name" value="Thiopur_methtran"/>
    <property type="match status" value="1"/>
</dbReference>
<dbReference type="InterPro" id="IPR029063">
    <property type="entry name" value="SAM-dependent_MTases_sf"/>
</dbReference>
<dbReference type="InterPro" id="IPR025835">
    <property type="entry name" value="Thiopurine_S-MeTrfase"/>
</dbReference>
<dbReference type="InterPro" id="IPR008854">
    <property type="entry name" value="TPMT"/>
</dbReference>
<dbReference type="PANTHER" id="PTHR10259">
    <property type="entry name" value="THIOPURINE S-METHYLTRANSFERASE"/>
    <property type="match status" value="1"/>
</dbReference>
<dbReference type="PANTHER" id="PTHR10259:SF11">
    <property type="entry name" value="THIOPURINE S-METHYLTRANSFERASE"/>
    <property type="match status" value="1"/>
</dbReference>
<dbReference type="Pfam" id="PF05724">
    <property type="entry name" value="TPMT"/>
    <property type="match status" value="1"/>
</dbReference>
<dbReference type="PIRSF" id="PIRSF023956">
    <property type="entry name" value="Thiopurine_S-methyltransferase"/>
    <property type="match status" value="1"/>
</dbReference>
<dbReference type="SUPFAM" id="SSF53335">
    <property type="entry name" value="S-adenosyl-L-methionine-dependent methyltransferases"/>
    <property type="match status" value="1"/>
</dbReference>
<dbReference type="PROSITE" id="PS51585">
    <property type="entry name" value="SAM_MT_TPMT"/>
    <property type="match status" value="1"/>
</dbReference>
<protein>
    <recommendedName>
        <fullName>Thiopurine S-methyltransferase</fullName>
        <ecNumber>2.1.1.67</ecNumber>
    </recommendedName>
    <alternativeName>
        <fullName>Thiopurine methyltransferase</fullName>
    </alternativeName>
</protein>
<accession>Q3BCQ8</accession>